<accession>Q12SU8</accession>
<proteinExistence type="inferred from homology"/>
<name>RL24_SHEDO</name>
<keyword id="KW-1185">Reference proteome</keyword>
<keyword id="KW-0687">Ribonucleoprotein</keyword>
<keyword id="KW-0689">Ribosomal protein</keyword>
<keyword id="KW-0694">RNA-binding</keyword>
<keyword id="KW-0699">rRNA-binding</keyword>
<evidence type="ECO:0000255" key="1">
    <source>
        <dbReference type="HAMAP-Rule" id="MF_01326"/>
    </source>
</evidence>
<evidence type="ECO:0000305" key="2"/>
<sequence>MAAKIRREDEIIVLAGKDKGKRAKVSQVLPTGKLIVEGINLVKKHQKPNPQLGVTGGVIEKEAPIQTSNVAIFNQATGKADRVGFRFEDGKKVRFFKSNSELIK</sequence>
<feature type="chain" id="PRO_1000052305" description="Large ribosomal subunit protein uL24">
    <location>
        <begin position="1"/>
        <end position="104"/>
    </location>
</feature>
<dbReference type="EMBL" id="CP000302">
    <property type="protein sequence ID" value="ABE53478.1"/>
    <property type="molecule type" value="Genomic_DNA"/>
</dbReference>
<dbReference type="RefSeq" id="WP_011494645.1">
    <property type="nucleotide sequence ID" value="NC_007954.1"/>
</dbReference>
<dbReference type="SMR" id="Q12SU8"/>
<dbReference type="STRING" id="318161.Sden_0181"/>
<dbReference type="KEGG" id="sdn:Sden_0181"/>
<dbReference type="eggNOG" id="COG0198">
    <property type="taxonomic scope" value="Bacteria"/>
</dbReference>
<dbReference type="HOGENOM" id="CLU_093315_2_2_6"/>
<dbReference type="OrthoDB" id="9807419at2"/>
<dbReference type="Proteomes" id="UP000001982">
    <property type="component" value="Chromosome"/>
</dbReference>
<dbReference type="GO" id="GO:1990904">
    <property type="term" value="C:ribonucleoprotein complex"/>
    <property type="evidence" value="ECO:0007669"/>
    <property type="project" value="UniProtKB-KW"/>
</dbReference>
<dbReference type="GO" id="GO:0005840">
    <property type="term" value="C:ribosome"/>
    <property type="evidence" value="ECO:0007669"/>
    <property type="project" value="UniProtKB-KW"/>
</dbReference>
<dbReference type="GO" id="GO:0019843">
    <property type="term" value="F:rRNA binding"/>
    <property type="evidence" value="ECO:0007669"/>
    <property type="project" value="UniProtKB-UniRule"/>
</dbReference>
<dbReference type="GO" id="GO:0003735">
    <property type="term" value="F:structural constituent of ribosome"/>
    <property type="evidence" value="ECO:0007669"/>
    <property type="project" value="InterPro"/>
</dbReference>
<dbReference type="GO" id="GO:0006412">
    <property type="term" value="P:translation"/>
    <property type="evidence" value="ECO:0007669"/>
    <property type="project" value="UniProtKB-UniRule"/>
</dbReference>
<dbReference type="CDD" id="cd06089">
    <property type="entry name" value="KOW_RPL26"/>
    <property type="match status" value="1"/>
</dbReference>
<dbReference type="FunFam" id="2.30.30.30:FF:000004">
    <property type="entry name" value="50S ribosomal protein L24"/>
    <property type="match status" value="1"/>
</dbReference>
<dbReference type="Gene3D" id="2.30.30.30">
    <property type="match status" value="1"/>
</dbReference>
<dbReference type="HAMAP" id="MF_01326_B">
    <property type="entry name" value="Ribosomal_uL24_B"/>
    <property type="match status" value="1"/>
</dbReference>
<dbReference type="InterPro" id="IPR005824">
    <property type="entry name" value="KOW"/>
</dbReference>
<dbReference type="InterPro" id="IPR014722">
    <property type="entry name" value="Rib_uL2_dom2"/>
</dbReference>
<dbReference type="InterPro" id="IPR003256">
    <property type="entry name" value="Ribosomal_uL24"/>
</dbReference>
<dbReference type="InterPro" id="IPR005825">
    <property type="entry name" value="Ribosomal_uL24_CS"/>
</dbReference>
<dbReference type="InterPro" id="IPR041988">
    <property type="entry name" value="Ribosomal_uL24_KOW"/>
</dbReference>
<dbReference type="InterPro" id="IPR008991">
    <property type="entry name" value="Translation_prot_SH3-like_sf"/>
</dbReference>
<dbReference type="NCBIfam" id="TIGR01079">
    <property type="entry name" value="rplX_bact"/>
    <property type="match status" value="1"/>
</dbReference>
<dbReference type="PANTHER" id="PTHR12903">
    <property type="entry name" value="MITOCHONDRIAL RIBOSOMAL PROTEIN L24"/>
    <property type="match status" value="1"/>
</dbReference>
<dbReference type="Pfam" id="PF00467">
    <property type="entry name" value="KOW"/>
    <property type="match status" value="1"/>
</dbReference>
<dbReference type="Pfam" id="PF17136">
    <property type="entry name" value="ribosomal_L24"/>
    <property type="match status" value="1"/>
</dbReference>
<dbReference type="SUPFAM" id="SSF50104">
    <property type="entry name" value="Translation proteins SH3-like domain"/>
    <property type="match status" value="1"/>
</dbReference>
<dbReference type="PROSITE" id="PS01108">
    <property type="entry name" value="RIBOSOMAL_L24"/>
    <property type="match status" value="1"/>
</dbReference>
<protein>
    <recommendedName>
        <fullName evidence="1">Large ribosomal subunit protein uL24</fullName>
    </recommendedName>
    <alternativeName>
        <fullName evidence="2">50S ribosomal protein L24</fullName>
    </alternativeName>
</protein>
<organism>
    <name type="scientific">Shewanella denitrificans (strain OS217 / ATCC BAA-1090 / DSM 15013)</name>
    <dbReference type="NCBI Taxonomy" id="318161"/>
    <lineage>
        <taxon>Bacteria</taxon>
        <taxon>Pseudomonadati</taxon>
        <taxon>Pseudomonadota</taxon>
        <taxon>Gammaproteobacteria</taxon>
        <taxon>Alteromonadales</taxon>
        <taxon>Shewanellaceae</taxon>
        <taxon>Shewanella</taxon>
    </lineage>
</organism>
<comment type="function">
    <text evidence="1">One of two assembly initiator proteins, it binds directly to the 5'-end of the 23S rRNA, where it nucleates assembly of the 50S subunit.</text>
</comment>
<comment type="function">
    <text evidence="1">One of the proteins that surrounds the polypeptide exit tunnel on the outside of the subunit.</text>
</comment>
<comment type="subunit">
    <text evidence="1">Part of the 50S ribosomal subunit.</text>
</comment>
<comment type="similarity">
    <text evidence="1">Belongs to the universal ribosomal protein uL24 family.</text>
</comment>
<reference key="1">
    <citation type="submission" date="2006-03" db="EMBL/GenBank/DDBJ databases">
        <title>Complete sequence of Shewanella denitrificans OS217.</title>
        <authorList>
            <consortium name="US DOE Joint Genome Institute"/>
            <person name="Copeland A."/>
            <person name="Lucas S."/>
            <person name="Lapidus A."/>
            <person name="Barry K."/>
            <person name="Detter J.C."/>
            <person name="Glavina del Rio T."/>
            <person name="Hammon N."/>
            <person name="Israni S."/>
            <person name="Dalin E."/>
            <person name="Tice H."/>
            <person name="Pitluck S."/>
            <person name="Brettin T."/>
            <person name="Bruce D."/>
            <person name="Han C."/>
            <person name="Tapia R."/>
            <person name="Gilna P."/>
            <person name="Kiss H."/>
            <person name="Schmutz J."/>
            <person name="Larimer F."/>
            <person name="Land M."/>
            <person name="Hauser L."/>
            <person name="Kyrpides N."/>
            <person name="Lykidis A."/>
            <person name="Richardson P."/>
        </authorList>
    </citation>
    <scope>NUCLEOTIDE SEQUENCE [LARGE SCALE GENOMIC DNA]</scope>
    <source>
        <strain>OS217 / ATCC BAA-1090 / DSM 15013</strain>
    </source>
</reference>
<gene>
    <name evidence="1" type="primary">rplX</name>
    <name type="ordered locus">Sden_0181</name>
</gene>